<proteinExistence type="evidence at transcript level"/>
<keyword id="KW-1015">Disulfide bond</keyword>
<keyword id="KW-0964">Secreted</keyword>
<keyword id="KW-0732">Signal</keyword>
<keyword id="KW-0800">Toxin</keyword>
<name>TX10_OPICY</name>
<protein>
    <recommendedName>
        <fullName>Insecticidal toxin OcyC10</fullName>
        <shortName>ITX</shortName>
    </recommendedName>
</protein>
<comment type="function">
    <text evidence="1">Insecticidal toxin.</text>
</comment>
<comment type="subcellular location">
    <subcellularLocation>
        <location evidence="1">Secreted</location>
    </subcellularLocation>
</comment>
<comment type="tissue specificity">
    <text>Expressed by the venom gland.</text>
</comment>
<feature type="signal peptide" evidence="2">
    <location>
        <begin position="1"/>
        <end position="19"/>
    </location>
</feature>
<feature type="chain" id="PRO_0000413158" description="Insecticidal toxin OcyC10">
    <location>
        <begin position="20"/>
        <end position="75"/>
    </location>
</feature>
<feature type="disulfide bond" evidence="1">
    <location>
        <begin position="50"/>
        <end position="62"/>
    </location>
</feature>
<feature type="disulfide bond" evidence="1">
    <location>
        <begin position="56"/>
        <end position="68"/>
    </location>
</feature>
<accession>C5J894</accession>
<reference key="1">
    <citation type="journal article" date="2009" name="Toxicon">
        <title>Cloning and characterization of cDNA sequences encoding for new venom peptides of the Brazilian scorpion Opisthacanthus cayaporum.</title>
        <authorList>
            <person name="Silva E.C."/>
            <person name="Camargos T.S."/>
            <person name="Maranhao A.Q."/>
            <person name="Silva-Pereira I."/>
            <person name="Silva L.P."/>
            <person name="Possani L.D."/>
            <person name="Schwartz E.F."/>
        </authorList>
    </citation>
    <scope>NUCLEOTIDE SEQUENCE [MRNA]</scope>
    <source>
        <tissue>Venom gland</tissue>
    </source>
</reference>
<sequence length="75" mass="8112">MNFATKIVILLLVAALILAVTSEKGDSSSDDNEAKETEGELPLSDFYGSCVRPKKCKPHLKCNAAQICVFPKTGR</sequence>
<dbReference type="EMBL" id="FM998752">
    <property type="protein sequence ID" value="CAX51398.1"/>
    <property type="molecule type" value="mRNA"/>
</dbReference>
<dbReference type="SMR" id="C5J894"/>
<dbReference type="TCDB" id="8.B.20.1.2">
    <property type="family name" value="the australian scorpion toxin (liotoxin) family"/>
</dbReference>
<dbReference type="GO" id="GO:0005576">
    <property type="term" value="C:extracellular region"/>
    <property type="evidence" value="ECO:0007669"/>
    <property type="project" value="UniProtKB-SubCell"/>
</dbReference>
<dbReference type="GO" id="GO:0090729">
    <property type="term" value="F:toxin activity"/>
    <property type="evidence" value="ECO:0007669"/>
    <property type="project" value="UniProtKB-KW"/>
</dbReference>
<organism>
    <name type="scientific">Opisthacanthus cayaporum</name>
    <name type="common">South American scorpion</name>
    <dbReference type="NCBI Taxonomy" id="573324"/>
    <lineage>
        <taxon>Eukaryota</taxon>
        <taxon>Metazoa</taxon>
        <taxon>Ecdysozoa</taxon>
        <taxon>Arthropoda</taxon>
        <taxon>Chelicerata</taxon>
        <taxon>Arachnida</taxon>
        <taxon>Scorpiones</taxon>
        <taxon>Iurida</taxon>
        <taxon>Scorpionoidea</taxon>
        <taxon>Hemiscorpiidae</taxon>
        <taxon>Opisthacanthus</taxon>
    </lineage>
</organism>
<evidence type="ECO:0000250" key="1"/>
<evidence type="ECO:0000255" key="2"/>